<name>RL23_MAGMM</name>
<organism>
    <name type="scientific">Magnetococcus marinus (strain ATCC BAA-1437 / JCM 17883 / MC-1)</name>
    <dbReference type="NCBI Taxonomy" id="156889"/>
    <lineage>
        <taxon>Bacteria</taxon>
        <taxon>Pseudomonadati</taxon>
        <taxon>Pseudomonadota</taxon>
        <taxon>Alphaproteobacteria</taxon>
        <taxon>Magnetococcales</taxon>
        <taxon>Magnetococcaceae</taxon>
        <taxon>Magnetococcus</taxon>
    </lineage>
</organism>
<reference key="1">
    <citation type="journal article" date="2009" name="Appl. Environ. Microbiol.">
        <title>Complete genome sequence of the chemolithoautotrophic marine magnetotactic coccus strain MC-1.</title>
        <authorList>
            <person name="Schubbe S."/>
            <person name="Williams T.J."/>
            <person name="Xie G."/>
            <person name="Kiss H.E."/>
            <person name="Brettin T.S."/>
            <person name="Martinez D."/>
            <person name="Ross C.A."/>
            <person name="Schuler D."/>
            <person name="Cox B.L."/>
            <person name="Nealson K.H."/>
            <person name="Bazylinski D.A."/>
        </authorList>
    </citation>
    <scope>NUCLEOTIDE SEQUENCE [LARGE SCALE GENOMIC DNA]</scope>
    <source>
        <strain>ATCC BAA-1437 / JCM 17883 / MC-1</strain>
    </source>
</reference>
<protein>
    <recommendedName>
        <fullName evidence="1">Large ribosomal subunit protein uL23</fullName>
    </recommendedName>
    <alternativeName>
        <fullName evidence="2">50S ribosomal protein L23</fullName>
    </alternativeName>
</protein>
<gene>
    <name evidence="1" type="primary">rplW</name>
    <name type="ordered locus">Mmc1_0849</name>
</gene>
<dbReference type="EMBL" id="CP000471">
    <property type="protein sequence ID" value="ABK43368.1"/>
    <property type="molecule type" value="Genomic_DNA"/>
</dbReference>
<dbReference type="RefSeq" id="WP_011712527.1">
    <property type="nucleotide sequence ID" value="NC_008576.1"/>
</dbReference>
<dbReference type="SMR" id="A0L5X5"/>
<dbReference type="STRING" id="156889.Mmc1_0849"/>
<dbReference type="KEGG" id="mgm:Mmc1_0849"/>
<dbReference type="eggNOG" id="COG0089">
    <property type="taxonomic scope" value="Bacteria"/>
</dbReference>
<dbReference type="HOGENOM" id="CLU_037562_3_1_5"/>
<dbReference type="OrthoDB" id="9793353at2"/>
<dbReference type="Proteomes" id="UP000002586">
    <property type="component" value="Chromosome"/>
</dbReference>
<dbReference type="GO" id="GO:1990904">
    <property type="term" value="C:ribonucleoprotein complex"/>
    <property type="evidence" value="ECO:0007669"/>
    <property type="project" value="UniProtKB-KW"/>
</dbReference>
<dbReference type="GO" id="GO:0005840">
    <property type="term" value="C:ribosome"/>
    <property type="evidence" value="ECO:0007669"/>
    <property type="project" value="UniProtKB-KW"/>
</dbReference>
<dbReference type="GO" id="GO:0019843">
    <property type="term" value="F:rRNA binding"/>
    <property type="evidence" value="ECO:0007669"/>
    <property type="project" value="UniProtKB-UniRule"/>
</dbReference>
<dbReference type="GO" id="GO:0003735">
    <property type="term" value="F:structural constituent of ribosome"/>
    <property type="evidence" value="ECO:0007669"/>
    <property type="project" value="InterPro"/>
</dbReference>
<dbReference type="GO" id="GO:0006412">
    <property type="term" value="P:translation"/>
    <property type="evidence" value="ECO:0007669"/>
    <property type="project" value="UniProtKB-UniRule"/>
</dbReference>
<dbReference type="FunFam" id="3.30.70.330:FF:000001">
    <property type="entry name" value="50S ribosomal protein L23"/>
    <property type="match status" value="1"/>
</dbReference>
<dbReference type="Gene3D" id="3.30.70.330">
    <property type="match status" value="1"/>
</dbReference>
<dbReference type="HAMAP" id="MF_01369_B">
    <property type="entry name" value="Ribosomal_uL23_B"/>
    <property type="match status" value="1"/>
</dbReference>
<dbReference type="InterPro" id="IPR012677">
    <property type="entry name" value="Nucleotide-bd_a/b_plait_sf"/>
</dbReference>
<dbReference type="InterPro" id="IPR013025">
    <property type="entry name" value="Ribosomal_uL23-like"/>
</dbReference>
<dbReference type="InterPro" id="IPR012678">
    <property type="entry name" value="Ribosomal_uL23/eL15/eS24_sf"/>
</dbReference>
<dbReference type="InterPro" id="IPR001014">
    <property type="entry name" value="Ribosomal_uL23_CS"/>
</dbReference>
<dbReference type="NCBIfam" id="NF004359">
    <property type="entry name" value="PRK05738.1-3"/>
    <property type="match status" value="1"/>
</dbReference>
<dbReference type="NCBIfam" id="NF004363">
    <property type="entry name" value="PRK05738.2-4"/>
    <property type="match status" value="1"/>
</dbReference>
<dbReference type="PANTHER" id="PTHR11620">
    <property type="entry name" value="60S RIBOSOMAL PROTEIN L23A"/>
    <property type="match status" value="1"/>
</dbReference>
<dbReference type="Pfam" id="PF00276">
    <property type="entry name" value="Ribosomal_L23"/>
    <property type="match status" value="1"/>
</dbReference>
<dbReference type="SUPFAM" id="SSF54189">
    <property type="entry name" value="Ribosomal proteins S24e, L23 and L15e"/>
    <property type="match status" value="1"/>
</dbReference>
<dbReference type="PROSITE" id="PS00050">
    <property type="entry name" value="RIBOSOMAL_L23"/>
    <property type="match status" value="1"/>
</dbReference>
<accession>A0L5X5</accession>
<sequence>MNDLRMYNVLVRPLVTEKSTMQLEKGNQISFAVATWANKPQIKKAIETIYSVKVEAVQVSNAKGKTKRFGKLEGKRKDWKRAVVRLQEGQSIDLFDQGA</sequence>
<proteinExistence type="inferred from homology"/>
<evidence type="ECO:0000255" key="1">
    <source>
        <dbReference type="HAMAP-Rule" id="MF_01369"/>
    </source>
</evidence>
<evidence type="ECO:0000305" key="2"/>
<keyword id="KW-1185">Reference proteome</keyword>
<keyword id="KW-0687">Ribonucleoprotein</keyword>
<keyword id="KW-0689">Ribosomal protein</keyword>
<keyword id="KW-0694">RNA-binding</keyword>
<keyword id="KW-0699">rRNA-binding</keyword>
<feature type="chain" id="PRO_1000184091" description="Large ribosomal subunit protein uL23">
    <location>
        <begin position="1"/>
        <end position="99"/>
    </location>
</feature>
<comment type="function">
    <text evidence="1">One of the early assembly proteins it binds 23S rRNA. One of the proteins that surrounds the polypeptide exit tunnel on the outside of the ribosome. Forms the main docking site for trigger factor binding to the ribosome.</text>
</comment>
<comment type="subunit">
    <text evidence="1">Part of the 50S ribosomal subunit. Contacts protein L29, and trigger factor when it is bound to the ribosome.</text>
</comment>
<comment type="similarity">
    <text evidence="1">Belongs to the universal ribosomal protein uL23 family.</text>
</comment>